<keyword id="KW-0067">ATP-binding</keyword>
<keyword id="KW-0963">Cytoplasm</keyword>
<keyword id="KW-0436">Ligase</keyword>
<keyword id="KW-0547">Nucleotide-binding</keyword>
<keyword id="KW-0566">Pantothenate biosynthesis</keyword>
<evidence type="ECO:0000255" key="1">
    <source>
        <dbReference type="HAMAP-Rule" id="MF_00158"/>
    </source>
</evidence>
<gene>
    <name evidence="1" type="primary">panC</name>
    <name type="ordered locus">NWMN_2495</name>
</gene>
<proteinExistence type="inferred from homology"/>
<feature type="chain" id="PRO_1000076870" description="Pantothenate synthetase">
    <location>
        <begin position="1"/>
        <end position="283"/>
    </location>
</feature>
<feature type="active site" description="Proton donor" evidence="1">
    <location>
        <position position="38"/>
    </location>
</feature>
<feature type="binding site" evidence="1">
    <location>
        <begin position="31"/>
        <end position="38"/>
    </location>
    <ligand>
        <name>ATP</name>
        <dbReference type="ChEBI" id="CHEBI:30616"/>
    </ligand>
</feature>
<feature type="binding site" evidence="1">
    <location>
        <position position="62"/>
    </location>
    <ligand>
        <name>(R)-pantoate</name>
        <dbReference type="ChEBI" id="CHEBI:15980"/>
    </ligand>
</feature>
<feature type="binding site" evidence="1">
    <location>
        <position position="62"/>
    </location>
    <ligand>
        <name>beta-alanine</name>
        <dbReference type="ChEBI" id="CHEBI:57966"/>
    </ligand>
</feature>
<feature type="binding site" evidence="1">
    <location>
        <begin position="148"/>
        <end position="151"/>
    </location>
    <ligand>
        <name>ATP</name>
        <dbReference type="ChEBI" id="CHEBI:30616"/>
    </ligand>
</feature>
<feature type="binding site" evidence="1">
    <location>
        <position position="154"/>
    </location>
    <ligand>
        <name>(R)-pantoate</name>
        <dbReference type="ChEBI" id="CHEBI:15980"/>
    </ligand>
</feature>
<feature type="binding site" evidence="1">
    <location>
        <position position="177"/>
    </location>
    <ligand>
        <name>ATP</name>
        <dbReference type="ChEBI" id="CHEBI:30616"/>
    </ligand>
</feature>
<feature type="binding site" evidence="1">
    <location>
        <begin position="185"/>
        <end position="188"/>
    </location>
    <ligand>
        <name>ATP</name>
        <dbReference type="ChEBI" id="CHEBI:30616"/>
    </ligand>
</feature>
<comment type="function">
    <text evidence="1">Catalyzes the condensation of pantoate with beta-alanine in an ATP-dependent reaction via a pantoyl-adenylate intermediate.</text>
</comment>
<comment type="catalytic activity">
    <reaction evidence="1">
        <text>(R)-pantoate + beta-alanine + ATP = (R)-pantothenate + AMP + diphosphate + H(+)</text>
        <dbReference type="Rhea" id="RHEA:10912"/>
        <dbReference type="ChEBI" id="CHEBI:15378"/>
        <dbReference type="ChEBI" id="CHEBI:15980"/>
        <dbReference type="ChEBI" id="CHEBI:29032"/>
        <dbReference type="ChEBI" id="CHEBI:30616"/>
        <dbReference type="ChEBI" id="CHEBI:33019"/>
        <dbReference type="ChEBI" id="CHEBI:57966"/>
        <dbReference type="ChEBI" id="CHEBI:456215"/>
        <dbReference type="EC" id="6.3.2.1"/>
    </reaction>
</comment>
<comment type="pathway">
    <text evidence="1">Cofactor biosynthesis; (R)-pantothenate biosynthesis; (R)-pantothenate from (R)-pantoate and beta-alanine: step 1/1.</text>
</comment>
<comment type="subunit">
    <text evidence="1">Homodimer.</text>
</comment>
<comment type="subcellular location">
    <subcellularLocation>
        <location evidence="1">Cytoplasm</location>
    </subcellularLocation>
</comment>
<comment type="miscellaneous">
    <text evidence="1">The reaction proceeds by a bi uni uni bi ping pong mechanism.</text>
</comment>
<comment type="similarity">
    <text evidence="1">Belongs to the pantothenate synthetase family.</text>
</comment>
<name>PANC_STAAE</name>
<accession>A6QK85</accession>
<organism>
    <name type="scientific">Staphylococcus aureus (strain Newman)</name>
    <dbReference type="NCBI Taxonomy" id="426430"/>
    <lineage>
        <taxon>Bacteria</taxon>
        <taxon>Bacillati</taxon>
        <taxon>Bacillota</taxon>
        <taxon>Bacilli</taxon>
        <taxon>Bacillales</taxon>
        <taxon>Staphylococcaceae</taxon>
        <taxon>Staphylococcus</taxon>
    </lineage>
</organism>
<protein>
    <recommendedName>
        <fullName evidence="1">Pantothenate synthetase</fullName>
        <shortName evidence="1">PS</shortName>
        <ecNumber evidence="1">6.3.2.1</ecNumber>
    </recommendedName>
    <alternativeName>
        <fullName evidence="1">Pantoate--beta-alanine ligase</fullName>
    </alternativeName>
    <alternativeName>
        <fullName evidence="1">Pantoate-activating enzyme</fullName>
    </alternativeName>
</protein>
<sequence>MTKLITTVKEMQHIVKAAKRSGTTIGFIPTMGALHDGHLTMVRESVSTNDITIVSVFVNPLQFGPNEDFDAYPRQIDKDLELVSEVGADIVFHPAVEDMYPGELGIDVKVGPLADVLEGAKRPGHFDGVVTVVNKLFNIVMPDYAYFGKKDAQQLAIVEQMVKDFNHAVEIIGIDIVREADGLAKSSRNVYLTEQERQEAVHLSKSLLLAQALYQDGERQSKVIIDRVTEYLESHISGRIEEVAVYSYPQLVEQHEITGRIFISLAVKFSKARLIDNIIIGAE</sequence>
<reference key="1">
    <citation type="journal article" date="2008" name="J. Bacteriol.">
        <title>Genome sequence of Staphylococcus aureus strain Newman and comparative analysis of staphylococcal genomes: polymorphism and evolution of two major pathogenicity islands.</title>
        <authorList>
            <person name="Baba T."/>
            <person name="Bae T."/>
            <person name="Schneewind O."/>
            <person name="Takeuchi F."/>
            <person name="Hiramatsu K."/>
        </authorList>
    </citation>
    <scope>NUCLEOTIDE SEQUENCE [LARGE SCALE GENOMIC DNA]</scope>
    <source>
        <strain>Newman</strain>
    </source>
</reference>
<dbReference type="EC" id="6.3.2.1" evidence="1"/>
<dbReference type="EMBL" id="AP009351">
    <property type="protein sequence ID" value="BAF68767.1"/>
    <property type="molecule type" value="Genomic_DNA"/>
</dbReference>
<dbReference type="RefSeq" id="WP_000163735.1">
    <property type="nucleotide sequence ID" value="NZ_JBBIAE010000005.1"/>
</dbReference>
<dbReference type="SMR" id="A6QK85"/>
<dbReference type="KEGG" id="sae:NWMN_2495"/>
<dbReference type="HOGENOM" id="CLU_047148_0_0_9"/>
<dbReference type="UniPathway" id="UPA00028">
    <property type="reaction ID" value="UER00005"/>
</dbReference>
<dbReference type="Proteomes" id="UP000006386">
    <property type="component" value="Chromosome"/>
</dbReference>
<dbReference type="GO" id="GO:0005829">
    <property type="term" value="C:cytosol"/>
    <property type="evidence" value="ECO:0007669"/>
    <property type="project" value="TreeGrafter"/>
</dbReference>
<dbReference type="GO" id="GO:0005524">
    <property type="term" value="F:ATP binding"/>
    <property type="evidence" value="ECO:0007669"/>
    <property type="project" value="UniProtKB-KW"/>
</dbReference>
<dbReference type="GO" id="GO:0004592">
    <property type="term" value="F:pantoate-beta-alanine ligase activity"/>
    <property type="evidence" value="ECO:0007669"/>
    <property type="project" value="UniProtKB-UniRule"/>
</dbReference>
<dbReference type="GO" id="GO:0015940">
    <property type="term" value="P:pantothenate biosynthetic process"/>
    <property type="evidence" value="ECO:0007669"/>
    <property type="project" value="UniProtKB-UniRule"/>
</dbReference>
<dbReference type="CDD" id="cd00560">
    <property type="entry name" value="PanC"/>
    <property type="match status" value="1"/>
</dbReference>
<dbReference type="FunFam" id="3.30.1300.10:FF:000001">
    <property type="entry name" value="Pantothenate synthetase"/>
    <property type="match status" value="1"/>
</dbReference>
<dbReference type="FunFam" id="3.40.50.620:FF:000013">
    <property type="entry name" value="Pantothenate synthetase"/>
    <property type="match status" value="1"/>
</dbReference>
<dbReference type="Gene3D" id="3.40.50.620">
    <property type="entry name" value="HUPs"/>
    <property type="match status" value="1"/>
</dbReference>
<dbReference type="Gene3D" id="3.30.1300.10">
    <property type="entry name" value="Pantoate-beta-alanine ligase, C-terminal domain"/>
    <property type="match status" value="1"/>
</dbReference>
<dbReference type="HAMAP" id="MF_00158">
    <property type="entry name" value="PanC"/>
    <property type="match status" value="1"/>
</dbReference>
<dbReference type="InterPro" id="IPR003721">
    <property type="entry name" value="Pantoate_ligase"/>
</dbReference>
<dbReference type="InterPro" id="IPR042176">
    <property type="entry name" value="Pantoate_ligase_C"/>
</dbReference>
<dbReference type="InterPro" id="IPR014729">
    <property type="entry name" value="Rossmann-like_a/b/a_fold"/>
</dbReference>
<dbReference type="NCBIfam" id="TIGR00018">
    <property type="entry name" value="panC"/>
    <property type="match status" value="1"/>
</dbReference>
<dbReference type="PANTHER" id="PTHR21299">
    <property type="entry name" value="CYTIDYLATE KINASE/PANTOATE-BETA-ALANINE LIGASE"/>
    <property type="match status" value="1"/>
</dbReference>
<dbReference type="PANTHER" id="PTHR21299:SF1">
    <property type="entry name" value="PANTOATE--BETA-ALANINE LIGASE"/>
    <property type="match status" value="1"/>
</dbReference>
<dbReference type="Pfam" id="PF02569">
    <property type="entry name" value="Pantoate_ligase"/>
    <property type="match status" value="1"/>
</dbReference>
<dbReference type="SUPFAM" id="SSF52374">
    <property type="entry name" value="Nucleotidylyl transferase"/>
    <property type="match status" value="1"/>
</dbReference>